<gene>
    <name type="ordered locus">WS1752</name>
</gene>
<reference key="1">
    <citation type="journal article" date="2003" name="Proc. Natl. Acad. Sci. U.S.A.">
        <title>Complete genome sequence and analysis of Wolinella succinogenes.</title>
        <authorList>
            <person name="Baar C."/>
            <person name="Eppinger M."/>
            <person name="Raddatz G."/>
            <person name="Simon J."/>
            <person name="Lanz C."/>
            <person name="Klimmek O."/>
            <person name="Nandakumar R."/>
            <person name="Gross R."/>
            <person name="Rosinus A."/>
            <person name="Keller H."/>
            <person name="Jagtap P."/>
            <person name="Linke B."/>
            <person name="Meyer F."/>
            <person name="Lederer H."/>
            <person name="Schuster S.C."/>
        </authorList>
    </citation>
    <scope>NUCLEOTIDE SEQUENCE [LARGE SCALE GENOMIC DNA]</scope>
    <source>
        <strain>ATCC 29543 / DSM 1740 / CCUG 13145 / JCM 31913 / LMG 7466 / NCTC 11488 / FDC 602W</strain>
    </source>
</reference>
<sequence length="145" mass="16877">MEKLVESLSSNQKRNQALLHPFEGNEALLELTKGRLGNEEPCHVKGAQGEEYVILPKHLLLGLVNLLQKGREERVKLNLERDILQQMPIDFEDVWEVALQEIHRENANPSYVDTKRLIKEIKRRHPNLFFQLGDLFGRAKEEMLD</sequence>
<organism>
    <name type="scientific">Wolinella succinogenes (strain ATCC 29543 / DSM 1740 / CCUG 13145 / JCM 31913 / LMG 7466 / NCTC 11488 / FDC 602W)</name>
    <name type="common">Vibrio succinogenes</name>
    <dbReference type="NCBI Taxonomy" id="273121"/>
    <lineage>
        <taxon>Bacteria</taxon>
        <taxon>Pseudomonadati</taxon>
        <taxon>Campylobacterota</taxon>
        <taxon>Epsilonproteobacteria</taxon>
        <taxon>Campylobacterales</taxon>
        <taxon>Helicobacteraceae</taxon>
        <taxon>Wolinella</taxon>
    </lineage>
</organism>
<feature type="chain" id="PRO_0000394796" description="UPF0763 protein WS1752">
    <location>
        <begin position="1"/>
        <end position="145"/>
    </location>
</feature>
<protein>
    <recommendedName>
        <fullName evidence="1">UPF0763 protein WS1752</fullName>
    </recommendedName>
</protein>
<keyword id="KW-1185">Reference proteome</keyword>
<proteinExistence type="inferred from homology"/>
<evidence type="ECO:0000255" key="1">
    <source>
        <dbReference type="HAMAP-Rule" id="MF_02110"/>
    </source>
</evidence>
<name>Y1752_WOLSU</name>
<comment type="similarity">
    <text evidence="1">Belongs to the UPF0763 family.</text>
</comment>
<dbReference type="EMBL" id="BX571661">
    <property type="protein sequence ID" value="CAE10774.1"/>
    <property type="molecule type" value="Genomic_DNA"/>
</dbReference>
<dbReference type="RefSeq" id="WP_011139557.1">
    <property type="nucleotide sequence ID" value="NC_005090.1"/>
</dbReference>
<dbReference type="STRING" id="273121.WS1752"/>
<dbReference type="KEGG" id="wsu:WS1752"/>
<dbReference type="eggNOG" id="ENOG5030YCA">
    <property type="taxonomic scope" value="Bacteria"/>
</dbReference>
<dbReference type="HOGENOM" id="CLU_120359_0_0_7"/>
<dbReference type="Proteomes" id="UP000000422">
    <property type="component" value="Chromosome"/>
</dbReference>
<dbReference type="HAMAP" id="MF_02110">
    <property type="entry name" value="UPF0763"/>
    <property type="match status" value="1"/>
</dbReference>
<dbReference type="InterPro" id="IPR019724">
    <property type="entry name" value="UPF0763"/>
</dbReference>
<dbReference type="Pfam" id="PF10788">
    <property type="entry name" value="DUF2603"/>
    <property type="match status" value="1"/>
</dbReference>
<accession>Q7MR38</accession>